<sequence>MNRWAVPILHEHKHYYIVNKVHGIVCQPPDLRTWYKYHDYEPPVLLDLLRKQHPNFGGEVWRTVHRLDEPVTGGVLVSRNKRAAAMFSRSLALGGNRGFPLTRRYVALLAREAKGLPSEGRITMGDMITDYKRLENDLVLLQLQTGRKHQIRKQMAQVFGQPVVNDKMYGGDSVDGIVDNLIGLHSAFIGAQCGLQARTYLIPIPRTQDAFKLWDKYIDEQGGFIPSVQKELRDFSLPSKLENTITLLSGGQGGIQISYK</sequence>
<feature type="chain" id="PRO_0000162749" description="21S rRNA pseudouridine(2819) synthase">
    <location>
        <begin position="1"/>
        <end position="260"/>
    </location>
</feature>
<feature type="active site" evidence="1">
    <location>
        <position position="68"/>
    </location>
</feature>
<comment type="function">
    <text evidence="2">Pseudouridylate synthase responsible for the pseudouridine-2819 formation in mitochondrial 21S rRNA. May modulate the efficiency or the fidelity of the mitochondrial translation machinery.</text>
</comment>
<comment type="catalytic activity">
    <reaction evidence="2">
        <text>uridine(2819) in 21S rRNA = pseudouridine(2819) in 21S rRNA</text>
        <dbReference type="Rhea" id="RHEA:42556"/>
        <dbReference type="Rhea" id="RHEA-COMP:10113"/>
        <dbReference type="Rhea" id="RHEA-COMP:10114"/>
        <dbReference type="ChEBI" id="CHEBI:65314"/>
        <dbReference type="ChEBI" id="CHEBI:65315"/>
        <dbReference type="EC" id="5.4.99.43"/>
    </reaction>
</comment>
<comment type="subcellular location">
    <subcellularLocation>
        <location evidence="2">Mitochondrion</location>
    </subcellularLocation>
</comment>
<comment type="similarity">
    <text evidence="3">Belongs to the pseudouridine synthase RluA family.</text>
</comment>
<name>PUS5_EREGS</name>
<proteinExistence type="inferred from homology"/>
<evidence type="ECO:0000250" key="1">
    <source>
        <dbReference type="UniProtKB" id="P0AA37"/>
    </source>
</evidence>
<evidence type="ECO:0000250" key="2">
    <source>
        <dbReference type="UniProtKB" id="Q06244"/>
    </source>
</evidence>
<evidence type="ECO:0000305" key="3"/>
<organism>
    <name type="scientific">Eremothecium gossypii (strain ATCC 10895 / CBS 109.51 / FGSC 9923 / NRRL Y-1056)</name>
    <name type="common">Yeast</name>
    <name type="synonym">Ashbya gossypii</name>
    <dbReference type="NCBI Taxonomy" id="284811"/>
    <lineage>
        <taxon>Eukaryota</taxon>
        <taxon>Fungi</taxon>
        <taxon>Dikarya</taxon>
        <taxon>Ascomycota</taxon>
        <taxon>Saccharomycotina</taxon>
        <taxon>Saccharomycetes</taxon>
        <taxon>Saccharomycetales</taxon>
        <taxon>Saccharomycetaceae</taxon>
        <taxon>Eremothecium</taxon>
    </lineage>
</organism>
<keyword id="KW-0413">Isomerase</keyword>
<keyword id="KW-0496">Mitochondrion</keyword>
<keyword id="KW-1185">Reference proteome</keyword>
<keyword id="KW-0698">rRNA processing</keyword>
<reference key="1">
    <citation type="journal article" date="2004" name="Science">
        <title>The Ashbya gossypii genome as a tool for mapping the ancient Saccharomyces cerevisiae genome.</title>
        <authorList>
            <person name="Dietrich F.S."/>
            <person name="Voegeli S."/>
            <person name="Brachat S."/>
            <person name="Lerch A."/>
            <person name="Gates K."/>
            <person name="Steiner S."/>
            <person name="Mohr C."/>
            <person name="Poehlmann R."/>
            <person name="Luedi P."/>
            <person name="Choi S."/>
            <person name="Wing R.A."/>
            <person name="Flavier A."/>
            <person name="Gaffney T.D."/>
            <person name="Philippsen P."/>
        </authorList>
    </citation>
    <scope>NUCLEOTIDE SEQUENCE [LARGE SCALE GENOMIC DNA]</scope>
    <source>
        <strain>ATCC 10895 / CBS 109.51 / FGSC 9923 / NRRL Y-1056</strain>
    </source>
</reference>
<reference key="2">
    <citation type="journal article" date="2013" name="G3 (Bethesda)">
        <title>Genomes of Ashbya fungi isolated from insects reveal four mating-type loci, numerous translocations, lack of transposons, and distinct gene duplications.</title>
        <authorList>
            <person name="Dietrich F.S."/>
            <person name="Voegeli S."/>
            <person name="Kuo S."/>
            <person name="Philippsen P."/>
        </authorList>
    </citation>
    <scope>GENOME REANNOTATION</scope>
    <source>
        <strain>ATCC 10895 / CBS 109.51 / FGSC 9923 / NRRL Y-1056</strain>
    </source>
</reference>
<gene>
    <name type="primary">PUS5</name>
    <name type="ordered locus">AGL134C</name>
</gene>
<protein>
    <recommendedName>
        <fullName>21S rRNA pseudouridine(2819) synthase</fullName>
        <ecNumber evidence="2">5.4.99.43</ecNumber>
    </recommendedName>
    <alternativeName>
        <fullName>Pseudouridine synthase 5</fullName>
    </alternativeName>
    <alternativeName>
        <fullName>Pseudouridylate synthase PUS5</fullName>
    </alternativeName>
    <alternativeName>
        <fullName>Uracil hydrolyase PUS5</fullName>
    </alternativeName>
</protein>
<accession>Q750S3</accession>
<dbReference type="EC" id="5.4.99.43" evidence="2"/>
<dbReference type="EMBL" id="AE016820">
    <property type="protein sequence ID" value="AAS54357.1"/>
    <property type="molecule type" value="Genomic_DNA"/>
</dbReference>
<dbReference type="RefSeq" id="NP_986533.1">
    <property type="nucleotide sequence ID" value="NM_211595.1"/>
</dbReference>
<dbReference type="SMR" id="Q750S3"/>
<dbReference type="FunCoup" id="Q750S3">
    <property type="interactions" value="102"/>
</dbReference>
<dbReference type="STRING" id="284811.Q750S3"/>
<dbReference type="EnsemblFungi" id="AAS54357">
    <property type="protein sequence ID" value="AAS54357"/>
    <property type="gene ID" value="AGOS_AGL134C"/>
</dbReference>
<dbReference type="GeneID" id="4622832"/>
<dbReference type="KEGG" id="ago:AGOS_AGL134C"/>
<dbReference type="eggNOG" id="KOG1919">
    <property type="taxonomic scope" value="Eukaryota"/>
</dbReference>
<dbReference type="HOGENOM" id="CLU_081037_0_0_1"/>
<dbReference type="InParanoid" id="Q750S3"/>
<dbReference type="OMA" id="CIITKIG"/>
<dbReference type="OrthoDB" id="428658at2759"/>
<dbReference type="Proteomes" id="UP000000591">
    <property type="component" value="Chromosome VII"/>
</dbReference>
<dbReference type="GO" id="GO:0005739">
    <property type="term" value="C:mitochondrion"/>
    <property type="evidence" value="ECO:0007669"/>
    <property type="project" value="UniProtKB-SubCell"/>
</dbReference>
<dbReference type="GO" id="GO:0160143">
    <property type="term" value="F:21S rRNA pseudouridine(2819) synthase activity"/>
    <property type="evidence" value="ECO:0007669"/>
    <property type="project" value="UniProtKB-EC"/>
</dbReference>
<dbReference type="GO" id="GO:0009982">
    <property type="term" value="F:pseudouridine synthase activity"/>
    <property type="evidence" value="ECO:0000318"/>
    <property type="project" value="GO_Central"/>
</dbReference>
<dbReference type="GO" id="GO:0004730">
    <property type="term" value="F:pseudouridylate synthase activity"/>
    <property type="evidence" value="ECO:0007669"/>
    <property type="project" value="EnsemblFungi"/>
</dbReference>
<dbReference type="GO" id="GO:0003723">
    <property type="term" value="F:RNA binding"/>
    <property type="evidence" value="ECO:0007669"/>
    <property type="project" value="InterPro"/>
</dbReference>
<dbReference type="GO" id="GO:0000455">
    <property type="term" value="P:enzyme-directed rRNA pseudouridine synthesis"/>
    <property type="evidence" value="ECO:0000318"/>
    <property type="project" value="GO_Central"/>
</dbReference>
<dbReference type="CDD" id="cd02869">
    <property type="entry name" value="PseudoU_synth_RluA_like"/>
    <property type="match status" value="1"/>
</dbReference>
<dbReference type="Gene3D" id="3.30.2350.10">
    <property type="entry name" value="Pseudouridine synthase"/>
    <property type="match status" value="1"/>
</dbReference>
<dbReference type="InterPro" id="IPR020103">
    <property type="entry name" value="PsdUridine_synth_cat_dom_sf"/>
</dbReference>
<dbReference type="InterPro" id="IPR006224">
    <property type="entry name" value="PsdUridine_synth_RluA-like_CS"/>
</dbReference>
<dbReference type="InterPro" id="IPR006145">
    <property type="entry name" value="PsdUridine_synth_RsuA/RluA"/>
</dbReference>
<dbReference type="InterPro" id="IPR050188">
    <property type="entry name" value="RluA_PseudoU_synthase"/>
</dbReference>
<dbReference type="PANTHER" id="PTHR21600:SF81">
    <property type="entry name" value="21S RRNA PSEUDOURIDINE(2819) SYNTHASE"/>
    <property type="match status" value="1"/>
</dbReference>
<dbReference type="PANTHER" id="PTHR21600">
    <property type="entry name" value="MITOCHONDRIAL RNA PSEUDOURIDINE SYNTHASE"/>
    <property type="match status" value="1"/>
</dbReference>
<dbReference type="Pfam" id="PF00849">
    <property type="entry name" value="PseudoU_synth_2"/>
    <property type="match status" value="1"/>
</dbReference>
<dbReference type="SUPFAM" id="SSF55120">
    <property type="entry name" value="Pseudouridine synthase"/>
    <property type="match status" value="1"/>
</dbReference>
<dbReference type="PROSITE" id="PS01129">
    <property type="entry name" value="PSI_RLU"/>
    <property type="match status" value="1"/>
</dbReference>